<keyword id="KW-1003">Cell membrane</keyword>
<keyword id="KW-0350">Heme biosynthesis</keyword>
<keyword id="KW-0472">Membrane</keyword>
<keyword id="KW-1185">Reference proteome</keyword>
<keyword id="KW-0808">Transferase</keyword>
<keyword id="KW-0812">Transmembrane</keyword>
<keyword id="KW-1133">Transmembrane helix</keyword>
<comment type="function">
    <text evidence="1">Converts heme B (protoheme IX) to heme O by substitution of the vinyl group on carbon 2 of heme B porphyrin ring with a hydroxyethyl farnesyl side group.</text>
</comment>
<comment type="catalytic activity">
    <reaction evidence="1">
        <text>heme b + (2E,6E)-farnesyl diphosphate + H2O = Fe(II)-heme o + diphosphate</text>
        <dbReference type="Rhea" id="RHEA:28070"/>
        <dbReference type="ChEBI" id="CHEBI:15377"/>
        <dbReference type="ChEBI" id="CHEBI:33019"/>
        <dbReference type="ChEBI" id="CHEBI:60344"/>
        <dbReference type="ChEBI" id="CHEBI:60530"/>
        <dbReference type="ChEBI" id="CHEBI:175763"/>
        <dbReference type="EC" id="2.5.1.141"/>
    </reaction>
</comment>
<comment type="pathway">
    <text evidence="1">Porphyrin-containing compound metabolism; heme O biosynthesis; heme O from protoheme: step 1/1.</text>
</comment>
<comment type="subunit">
    <text evidence="1">Interacts with CtaA.</text>
</comment>
<comment type="subcellular location">
    <subcellularLocation>
        <location evidence="1">Cell membrane</location>
        <topology evidence="1">Multi-pass membrane protein</topology>
    </subcellularLocation>
</comment>
<comment type="miscellaneous">
    <text evidence="1">Carbon 2 of the heme B porphyrin ring is defined according to the Fischer nomenclature.</text>
</comment>
<comment type="similarity">
    <text evidence="1">Belongs to the UbiA prenyltransferase family. Protoheme IX farnesyltransferase subfamily.</text>
</comment>
<name>COXX_GEOKA</name>
<sequence length="309" mass="34551">MAELKAVHQDAADAGHRSHVSVKAVWRELSSVVKIGIVNSNLITTFAGMWLAFYFTGEHFLENLHLVFFTLFGAALVIAGSCAINNYIDRDIDQYMERTKARPTVTGTMDPRRVLWLGIGLVAIGEMGLLMTTVTAAVVGLIGMATYVFLYTLWTKRHYTINTVVGSISGAVPPVIGWTAVDPEFHIVPLILFLIMFLWQPPHFLALAMKRCEEYRAAGIPMLPVVHGFAMTKRQIIVWVACLLPLPFYLFSLGVPFLIVATLLNVGWLLLGLAGLKMKDDIKWAKWMFVYSLNYLTILFVAMIIATLW</sequence>
<feature type="chain" id="PRO_0000327056" description="Protoheme IX farnesyltransferase">
    <location>
        <begin position="1"/>
        <end position="309"/>
    </location>
</feature>
<feature type="transmembrane region" description="Helical" evidence="1">
    <location>
        <begin position="35"/>
        <end position="55"/>
    </location>
</feature>
<feature type="transmembrane region" description="Helical" evidence="1">
    <location>
        <begin position="64"/>
        <end position="84"/>
    </location>
</feature>
<feature type="transmembrane region" description="Helical" evidence="1">
    <location>
        <begin position="114"/>
        <end position="134"/>
    </location>
</feature>
<feature type="transmembrane region" description="Helical" evidence="1">
    <location>
        <begin position="135"/>
        <end position="155"/>
    </location>
</feature>
<feature type="transmembrane region" description="Helical" evidence="1">
    <location>
        <begin position="161"/>
        <end position="181"/>
    </location>
</feature>
<feature type="transmembrane region" description="Helical" evidence="1">
    <location>
        <begin position="187"/>
        <end position="207"/>
    </location>
</feature>
<feature type="transmembrane region" description="Helical" evidence="1">
    <location>
        <begin position="231"/>
        <end position="251"/>
    </location>
</feature>
<feature type="transmembrane region" description="Helical" evidence="1">
    <location>
        <begin position="253"/>
        <end position="273"/>
    </location>
</feature>
<feature type="transmembrane region" description="Helical" evidence="1">
    <location>
        <begin position="289"/>
        <end position="309"/>
    </location>
</feature>
<evidence type="ECO:0000255" key="1">
    <source>
        <dbReference type="HAMAP-Rule" id="MF_00154"/>
    </source>
</evidence>
<accession>Q5L114</accession>
<protein>
    <recommendedName>
        <fullName evidence="1">Protoheme IX farnesyltransferase</fullName>
        <ecNumber evidence="1">2.5.1.141</ecNumber>
    </recommendedName>
    <alternativeName>
        <fullName evidence="1">Heme B farnesyltransferase</fullName>
    </alternativeName>
    <alternativeName>
        <fullName evidence="1">Heme O synthase</fullName>
    </alternativeName>
</protein>
<reference key="1">
    <citation type="journal article" date="2004" name="Nucleic Acids Res.">
        <title>Thermoadaptation trait revealed by the genome sequence of thermophilic Geobacillus kaustophilus.</title>
        <authorList>
            <person name="Takami H."/>
            <person name="Takaki Y."/>
            <person name="Chee G.-J."/>
            <person name="Nishi S."/>
            <person name="Shimamura S."/>
            <person name="Suzuki H."/>
            <person name="Matsui S."/>
            <person name="Uchiyama I."/>
        </authorList>
    </citation>
    <scope>NUCLEOTIDE SEQUENCE [LARGE SCALE GENOMIC DNA]</scope>
    <source>
        <strain>HTA426</strain>
    </source>
</reference>
<dbReference type="EC" id="2.5.1.141" evidence="1"/>
<dbReference type="EMBL" id="BA000043">
    <property type="protein sequence ID" value="BAD75366.1"/>
    <property type="molecule type" value="Genomic_DNA"/>
</dbReference>
<dbReference type="SMR" id="Q5L114"/>
<dbReference type="STRING" id="235909.GK1081"/>
<dbReference type="KEGG" id="gka:GK1081"/>
<dbReference type="eggNOG" id="COG0109">
    <property type="taxonomic scope" value="Bacteria"/>
</dbReference>
<dbReference type="HOGENOM" id="CLU_029631_0_0_9"/>
<dbReference type="UniPathway" id="UPA00834">
    <property type="reaction ID" value="UER00712"/>
</dbReference>
<dbReference type="Proteomes" id="UP000001172">
    <property type="component" value="Chromosome"/>
</dbReference>
<dbReference type="GO" id="GO:0005886">
    <property type="term" value="C:plasma membrane"/>
    <property type="evidence" value="ECO:0007669"/>
    <property type="project" value="UniProtKB-SubCell"/>
</dbReference>
<dbReference type="GO" id="GO:0008495">
    <property type="term" value="F:protoheme IX farnesyltransferase activity"/>
    <property type="evidence" value="ECO:0007669"/>
    <property type="project" value="UniProtKB-UniRule"/>
</dbReference>
<dbReference type="GO" id="GO:0048034">
    <property type="term" value="P:heme O biosynthetic process"/>
    <property type="evidence" value="ECO:0007669"/>
    <property type="project" value="UniProtKB-UniRule"/>
</dbReference>
<dbReference type="CDD" id="cd13957">
    <property type="entry name" value="PT_UbiA_Cox10"/>
    <property type="match status" value="1"/>
</dbReference>
<dbReference type="FunFam" id="1.10.357.140:FF:000001">
    <property type="entry name" value="Protoheme IX farnesyltransferase"/>
    <property type="match status" value="1"/>
</dbReference>
<dbReference type="Gene3D" id="1.10.357.140">
    <property type="entry name" value="UbiA prenyltransferase"/>
    <property type="match status" value="1"/>
</dbReference>
<dbReference type="HAMAP" id="MF_00154">
    <property type="entry name" value="CyoE_CtaB"/>
    <property type="match status" value="1"/>
</dbReference>
<dbReference type="InterPro" id="IPR006369">
    <property type="entry name" value="Protohaem_IX_farnesylTrfase"/>
</dbReference>
<dbReference type="InterPro" id="IPR000537">
    <property type="entry name" value="UbiA_prenyltransferase"/>
</dbReference>
<dbReference type="InterPro" id="IPR030470">
    <property type="entry name" value="UbiA_prenylTrfase_CS"/>
</dbReference>
<dbReference type="InterPro" id="IPR044878">
    <property type="entry name" value="UbiA_sf"/>
</dbReference>
<dbReference type="NCBIfam" id="TIGR01473">
    <property type="entry name" value="cyoE_ctaB"/>
    <property type="match status" value="1"/>
</dbReference>
<dbReference type="PANTHER" id="PTHR43448">
    <property type="entry name" value="PROTOHEME IX FARNESYLTRANSFERASE, MITOCHONDRIAL"/>
    <property type="match status" value="1"/>
</dbReference>
<dbReference type="PANTHER" id="PTHR43448:SF2">
    <property type="entry name" value="PROTOHEME IX FARNESYLTRANSFERASE, MITOCHONDRIAL"/>
    <property type="match status" value="1"/>
</dbReference>
<dbReference type="Pfam" id="PF01040">
    <property type="entry name" value="UbiA"/>
    <property type="match status" value="1"/>
</dbReference>
<dbReference type="PROSITE" id="PS00943">
    <property type="entry name" value="UBIA"/>
    <property type="match status" value="1"/>
</dbReference>
<organism>
    <name type="scientific">Geobacillus kaustophilus (strain HTA426)</name>
    <dbReference type="NCBI Taxonomy" id="235909"/>
    <lineage>
        <taxon>Bacteria</taxon>
        <taxon>Bacillati</taxon>
        <taxon>Bacillota</taxon>
        <taxon>Bacilli</taxon>
        <taxon>Bacillales</taxon>
        <taxon>Anoxybacillaceae</taxon>
        <taxon>Geobacillus</taxon>
        <taxon>Geobacillus thermoleovorans group</taxon>
    </lineage>
</organism>
<gene>
    <name evidence="1" type="primary">ctaB</name>
    <name type="ordered locus">GK1081</name>
</gene>
<proteinExistence type="inferred from homology"/>